<proteinExistence type="inferred from homology"/>
<comment type="function">
    <text evidence="1">Catalyzes the reduction of a carbon-carbon double bond in an enoyl moiety that is covalently linked to an acyl carrier protein (ACP). Involved in the elongation cycle of fatty acid which are used in the lipid metabolism (By similarity).</text>
</comment>
<comment type="catalytic activity">
    <reaction>
        <text>a 2,3-saturated acyl-[ACP] + NAD(+) = a (2E)-enoyl-[ACP] + NADH + H(+)</text>
        <dbReference type="Rhea" id="RHEA:10240"/>
        <dbReference type="Rhea" id="RHEA-COMP:9925"/>
        <dbReference type="Rhea" id="RHEA-COMP:9926"/>
        <dbReference type="ChEBI" id="CHEBI:15378"/>
        <dbReference type="ChEBI" id="CHEBI:57540"/>
        <dbReference type="ChEBI" id="CHEBI:57945"/>
        <dbReference type="ChEBI" id="CHEBI:78784"/>
        <dbReference type="ChEBI" id="CHEBI:78785"/>
        <dbReference type="EC" id="1.3.1.9"/>
    </reaction>
</comment>
<comment type="pathway">
    <text>Lipid metabolism; fatty acid biosynthesis.</text>
</comment>
<comment type="subunit">
    <text evidence="1">Homotetramer.</text>
</comment>
<comment type="similarity">
    <text evidence="2">Belongs to the short-chain dehydrogenases/reductases (SDR) family. FabI subfamily.</text>
</comment>
<sequence length="261" mass="28713">MTTRLLQGKKGLITGIANNMSISWAIAQLAKKHGAELWFTYQSEALEKRVKPLAEEIGCNFISELDVTDQKSISNLFNDIKEKWNSFDFLLHGMAFANKNELKGRYVDTSLENFYNSLHISCYSLLELSRSAETLMHDGGSILTLTYYGAEKVIPNYNIMGVAKAALEASVKYLANDMGENNIRVNAISAGPIKTLASSAISDFSTMLKFHASTAPLKRNITQEDVGGAAVYLFSELSKGVTGEIHYVDCGYNIIGSSKLL</sequence>
<gene>
    <name type="primary">fabI</name>
    <name type="ordered locus">RT0353</name>
</gene>
<name>FABI_RICTY</name>
<keyword id="KW-0275">Fatty acid biosynthesis</keyword>
<keyword id="KW-0276">Fatty acid metabolism</keyword>
<keyword id="KW-0444">Lipid biosynthesis</keyword>
<keyword id="KW-0443">Lipid metabolism</keyword>
<keyword id="KW-0520">NAD</keyword>
<keyword id="KW-0560">Oxidoreductase</keyword>
<evidence type="ECO:0000250" key="1"/>
<evidence type="ECO:0000305" key="2"/>
<protein>
    <recommendedName>
        <fullName>Enoyl-[acyl-carrier-protein] reductase [NADH] FabI</fullName>
        <shortName>ENR</shortName>
        <ecNumber>1.3.1.9</ecNumber>
    </recommendedName>
    <alternativeName>
        <fullName>NADH-dependent enoyl-ACP reductase</fullName>
    </alternativeName>
</protein>
<reference key="1">
    <citation type="journal article" date="2004" name="J. Bacteriol.">
        <title>Complete genome sequence of Rickettsia typhi and comparison with sequences of other Rickettsiae.</title>
        <authorList>
            <person name="McLeod M.P."/>
            <person name="Qin X."/>
            <person name="Karpathy S.E."/>
            <person name="Gioia J."/>
            <person name="Highlander S.K."/>
            <person name="Fox G.E."/>
            <person name="McNeill T.Z."/>
            <person name="Jiang H."/>
            <person name="Muzny D."/>
            <person name="Jacob L.S."/>
            <person name="Hawes A.C."/>
            <person name="Sodergren E."/>
            <person name="Gill R."/>
            <person name="Hume J."/>
            <person name="Morgan M."/>
            <person name="Fan G."/>
            <person name="Amin A.G."/>
            <person name="Gibbs R.A."/>
            <person name="Hong C."/>
            <person name="Yu X.-J."/>
            <person name="Walker D.H."/>
            <person name="Weinstock G.M."/>
        </authorList>
    </citation>
    <scope>NUCLEOTIDE SEQUENCE [LARGE SCALE GENOMIC DNA]</scope>
    <source>
        <strain>ATCC VR-144 / Wilmington</strain>
    </source>
</reference>
<dbReference type="EC" id="1.3.1.9"/>
<dbReference type="EMBL" id="AE017197">
    <property type="protein sequence ID" value="AAU03832.1"/>
    <property type="molecule type" value="Genomic_DNA"/>
</dbReference>
<dbReference type="RefSeq" id="WP_011190816.1">
    <property type="nucleotide sequence ID" value="NC_006142.1"/>
</dbReference>
<dbReference type="SMR" id="Q68X10"/>
<dbReference type="KEGG" id="rty:RT0353"/>
<dbReference type="eggNOG" id="COG0623">
    <property type="taxonomic scope" value="Bacteria"/>
</dbReference>
<dbReference type="HOGENOM" id="CLU_010194_10_1_5"/>
<dbReference type="OrthoDB" id="9803628at2"/>
<dbReference type="UniPathway" id="UPA00094"/>
<dbReference type="Proteomes" id="UP000000604">
    <property type="component" value="Chromosome"/>
</dbReference>
<dbReference type="GO" id="GO:0004318">
    <property type="term" value="F:enoyl-[acyl-carrier-protein] reductase (NADH) activity"/>
    <property type="evidence" value="ECO:0000250"/>
    <property type="project" value="UniProtKB"/>
</dbReference>
<dbReference type="GO" id="GO:0042802">
    <property type="term" value="F:identical protein binding"/>
    <property type="evidence" value="ECO:0000250"/>
    <property type="project" value="UniProtKB"/>
</dbReference>
<dbReference type="GO" id="GO:0030497">
    <property type="term" value="P:fatty acid elongation"/>
    <property type="evidence" value="ECO:0000250"/>
    <property type="project" value="UniProtKB"/>
</dbReference>
<dbReference type="CDD" id="cd05372">
    <property type="entry name" value="ENR_SDR"/>
    <property type="match status" value="1"/>
</dbReference>
<dbReference type="FunFam" id="1.10.8.400:FF:000001">
    <property type="entry name" value="Enoyl-[acyl-carrier-protein] reductase [NADH]"/>
    <property type="match status" value="1"/>
</dbReference>
<dbReference type="FunFam" id="3.40.50.720:FF:000054">
    <property type="entry name" value="Enoyl-[acyl-carrier-protein] reductase [NADH]"/>
    <property type="match status" value="1"/>
</dbReference>
<dbReference type="Gene3D" id="1.10.8.400">
    <property type="entry name" value="Enoyl acyl carrier protein reductase"/>
    <property type="match status" value="1"/>
</dbReference>
<dbReference type="Gene3D" id="3.40.50.720">
    <property type="entry name" value="NAD(P)-binding Rossmann-like Domain"/>
    <property type="match status" value="1"/>
</dbReference>
<dbReference type="InterPro" id="IPR014358">
    <property type="entry name" value="Enoyl-ACP_Rdtase_NADH"/>
</dbReference>
<dbReference type="InterPro" id="IPR036291">
    <property type="entry name" value="NAD(P)-bd_dom_sf"/>
</dbReference>
<dbReference type="InterPro" id="IPR002347">
    <property type="entry name" value="SDR_fam"/>
</dbReference>
<dbReference type="NCBIfam" id="NF005145">
    <property type="entry name" value="PRK06603.1"/>
    <property type="match status" value="1"/>
</dbReference>
<dbReference type="PANTHER" id="PTHR43159">
    <property type="entry name" value="ENOYL-[ACYL-CARRIER-PROTEIN] REDUCTASE"/>
    <property type="match status" value="1"/>
</dbReference>
<dbReference type="PANTHER" id="PTHR43159:SF2">
    <property type="entry name" value="ENOYL-[ACYL-CARRIER-PROTEIN] REDUCTASE [NADH], CHLOROPLASTIC"/>
    <property type="match status" value="1"/>
</dbReference>
<dbReference type="Pfam" id="PF13561">
    <property type="entry name" value="adh_short_C2"/>
    <property type="match status" value="1"/>
</dbReference>
<dbReference type="PIRSF" id="PIRSF000094">
    <property type="entry name" value="Enoyl-ACP_rdct"/>
    <property type="match status" value="1"/>
</dbReference>
<dbReference type="PRINTS" id="PR00081">
    <property type="entry name" value="GDHRDH"/>
</dbReference>
<dbReference type="SUPFAM" id="SSF51735">
    <property type="entry name" value="NAD(P)-binding Rossmann-fold domains"/>
    <property type="match status" value="1"/>
</dbReference>
<organism>
    <name type="scientific">Rickettsia typhi (strain ATCC VR-144 / Wilmington)</name>
    <dbReference type="NCBI Taxonomy" id="257363"/>
    <lineage>
        <taxon>Bacteria</taxon>
        <taxon>Pseudomonadati</taxon>
        <taxon>Pseudomonadota</taxon>
        <taxon>Alphaproteobacteria</taxon>
        <taxon>Rickettsiales</taxon>
        <taxon>Rickettsiaceae</taxon>
        <taxon>Rickettsieae</taxon>
        <taxon>Rickettsia</taxon>
        <taxon>typhus group</taxon>
    </lineage>
</organism>
<feature type="chain" id="PRO_0000286637" description="Enoyl-[acyl-carrier-protein] reductase [NADH] FabI">
    <location>
        <begin position="1"/>
        <end position="261"/>
    </location>
</feature>
<feature type="active site" description="Proton acceptor" evidence="1">
    <location>
        <position position="147"/>
    </location>
</feature>
<feature type="active site" description="Proton acceptor" evidence="1">
    <location>
        <position position="157"/>
    </location>
</feature>
<feature type="binding site" evidence="1">
    <location>
        <position position="15"/>
    </location>
    <ligand>
        <name>NAD(+)</name>
        <dbReference type="ChEBI" id="CHEBI:57540"/>
    </ligand>
</feature>
<feature type="binding site" evidence="1">
    <location>
        <begin position="21"/>
        <end position="22"/>
    </location>
    <ligand>
        <name>NAD(+)</name>
        <dbReference type="ChEBI" id="CHEBI:57540"/>
    </ligand>
</feature>
<feature type="binding site" evidence="1">
    <location>
        <position position="42"/>
    </location>
    <ligand>
        <name>NAD(+)</name>
        <dbReference type="ChEBI" id="CHEBI:57540"/>
    </ligand>
</feature>
<feature type="binding site" evidence="1">
    <location>
        <begin position="66"/>
        <end position="67"/>
    </location>
    <ligand>
        <name>NAD(+)</name>
        <dbReference type="ChEBI" id="CHEBI:57540"/>
    </ligand>
</feature>
<feature type="binding site" evidence="1">
    <location>
        <position position="94"/>
    </location>
    <ligand>
        <name>NAD(+)</name>
        <dbReference type="ChEBI" id="CHEBI:57540"/>
    </ligand>
</feature>
<feature type="binding site" evidence="1">
    <location>
        <position position="97"/>
    </location>
    <ligand>
        <name>substrate</name>
    </ligand>
</feature>
<feature type="binding site" evidence="1">
    <location>
        <position position="164"/>
    </location>
    <ligand>
        <name>NAD(+)</name>
        <dbReference type="ChEBI" id="CHEBI:57540"/>
    </ligand>
</feature>
<feature type="binding site" evidence="1">
    <location>
        <begin position="193"/>
        <end position="197"/>
    </location>
    <ligand>
        <name>NAD(+)</name>
        <dbReference type="ChEBI" id="CHEBI:57540"/>
    </ligand>
</feature>
<accession>Q68X10</accession>